<proteinExistence type="inferred from homology"/>
<feature type="chain" id="PRO_1000080826" description="Transcriptional repressor NrdR">
    <location>
        <begin position="1"/>
        <end position="157"/>
    </location>
</feature>
<feature type="domain" description="ATP-cone" evidence="1">
    <location>
        <begin position="49"/>
        <end position="139"/>
    </location>
</feature>
<feature type="zinc finger region" evidence="1">
    <location>
        <begin position="3"/>
        <end position="34"/>
    </location>
</feature>
<evidence type="ECO:0000255" key="1">
    <source>
        <dbReference type="HAMAP-Rule" id="MF_00440"/>
    </source>
</evidence>
<sequence length="157" mass="17824">MHCPFCSATDTKVIDSRLVADGHQVRRRRECLLCHERFTTFEGAELVMPRVVKQDGSRQPFDEDKLRGGMLRAVEKRPVSMDEIEQALSKIKSTLRATGEREVTSKMIGNLMMDHLVNLDKVAYIRFASVYRAFEDVSEFGEAIAKLQNDKSKSGKS</sequence>
<protein>
    <recommendedName>
        <fullName evidence="1">Transcriptional repressor NrdR</fullName>
    </recommendedName>
</protein>
<dbReference type="EMBL" id="CP000606">
    <property type="protein sequence ID" value="ABO23056.1"/>
    <property type="molecule type" value="Genomic_DNA"/>
</dbReference>
<dbReference type="RefSeq" id="WP_011864988.1">
    <property type="nucleotide sequence ID" value="NC_009092.1"/>
</dbReference>
<dbReference type="SMR" id="A3QC58"/>
<dbReference type="STRING" id="323850.Shew_1186"/>
<dbReference type="KEGG" id="slo:Shew_1186"/>
<dbReference type="eggNOG" id="COG1327">
    <property type="taxonomic scope" value="Bacteria"/>
</dbReference>
<dbReference type="HOGENOM" id="CLU_108412_0_0_6"/>
<dbReference type="OrthoDB" id="9807461at2"/>
<dbReference type="Proteomes" id="UP000001558">
    <property type="component" value="Chromosome"/>
</dbReference>
<dbReference type="GO" id="GO:0005524">
    <property type="term" value="F:ATP binding"/>
    <property type="evidence" value="ECO:0007669"/>
    <property type="project" value="UniProtKB-KW"/>
</dbReference>
<dbReference type="GO" id="GO:0003677">
    <property type="term" value="F:DNA binding"/>
    <property type="evidence" value="ECO:0007669"/>
    <property type="project" value="UniProtKB-KW"/>
</dbReference>
<dbReference type="GO" id="GO:0008270">
    <property type="term" value="F:zinc ion binding"/>
    <property type="evidence" value="ECO:0007669"/>
    <property type="project" value="UniProtKB-UniRule"/>
</dbReference>
<dbReference type="GO" id="GO:0045892">
    <property type="term" value="P:negative regulation of DNA-templated transcription"/>
    <property type="evidence" value="ECO:0007669"/>
    <property type="project" value="UniProtKB-UniRule"/>
</dbReference>
<dbReference type="HAMAP" id="MF_00440">
    <property type="entry name" value="NrdR"/>
    <property type="match status" value="1"/>
</dbReference>
<dbReference type="InterPro" id="IPR005144">
    <property type="entry name" value="ATP-cone_dom"/>
</dbReference>
<dbReference type="InterPro" id="IPR055173">
    <property type="entry name" value="NrdR-like_N"/>
</dbReference>
<dbReference type="InterPro" id="IPR003796">
    <property type="entry name" value="RNR_NrdR-like"/>
</dbReference>
<dbReference type="NCBIfam" id="TIGR00244">
    <property type="entry name" value="transcriptional regulator NrdR"/>
    <property type="match status" value="1"/>
</dbReference>
<dbReference type="PANTHER" id="PTHR30455">
    <property type="entry name" value="TRANSCRIPTIONAL REPRESSOR NRDR"/>
    <property type="match status" value="1"/>
</dbReference>
<dbReference type="PANTHER" id="PTHR30455:SF2">
    <property type="entry name" value="TRANSCRIPTIONAL REPRESSOR NRDR"/>
    <property type="match status" value="1"/>
</dbReference>
<dbReference type="Pfam" id="PF03477">
    <property type="entry name" value="ATP-cone"/>
    <property type="match status" value="1"/>
</dbReference>
<dbReference type="Pfam" id="PF22811">
    <property type="entry name" value="Zn_ribbon_NrdR"/>
    <property type="match status" value="1"/>
</dbReference>
<dbReference type="PROSITE" id="PS51161">
    <property type="entry name" value="ATP_CONE"/>
    <property type="match status" value="1"/>
</dbReference>
<gene>
    <name evidence="1" type="primary">nrdR</name>
    <name type="ordered locus">Shew_1186</name>
</gene>
<name>NRDR_SHELP</name>
<accession>A3QC58</accession>
<organism>
    <name type="scientific">Shewanella loihica (strain ATCC BAA-1088 / PV-4)</name>
    <dbReference type="NCBI Taxonomy" id="323850"/>
    <lineage>
        <taxon>Bacteria</taxon>
        <taxon>Pseudomonadati</taxon>
        <taxon>Pseudomonadota</taxon>
        <taxon>Gammaproteobacteria</taxon>
        <taxon>Alteromonadales</taxon>
        <taxon>Shewanellaceae</taxon>
        <taxon>Shewanella</taxon>
    </lineage>
</organism>
<reference key="1">
    <citation type="submission" date="2007-03" db="EMBL/GenBank/DDBJ databases">
        <title>Complete sequence of Shewanella loihica PV-4.</title>
        <authorList>
            <consortium name="US DOE Joint Genome Institute"/>
            <person name="Copeland A."/>
            <person name="Lucas S."/>
            <person name="Lapidus A."/>
            <person name="Barry K."/>
            <person name="Detter J.C."/>
            <person name="Glavina del Rio T."/>
            <person name="Hammon N."/>
            <person name="Israni S."/>
            <person name="Dalin E."/>
            <person name="Tice H."/>
            <person name="Pitluck S."/>
            <person name="Chain P."/>
            <person name="Malfatti S."/>
            <person name="Shin M."/>
            <person name="Vergez L."/>
            <person name="Schmutz J."/>
            <person name="Larimer F."/>
            <person name="Land M."/>
            <person name="Hauser L."/>
            <person name="Kyrpides N."/>
            <person name="Mikhailova N."/>
            <person name="Romine M.F."/>
            <person name="Serres G."/>
            <person name="Fredrickson J."/>
            <person name="Tiedje J."/>
            <person name="Richardson P."/>
        </authorList>
    </citation>
    <scope>NUCLEOTIDE SEQUENCE [LARGE SCALE GENOMIC DNA]</scope>
    <source>
        <strain>ATCC BAA-1088 / PV-4</strain>
    </source>
</reference>
<comment type="function">
    <text evidence="1">Negatively regulates transcription of bacterial ribonucleotide reductase nrd genes and operons by binding to NrdR-boxes.</text>
</comment>
<comment type="cofactor">
    <cofactor evidence="1">
        <name>Zn(2+)</name>
        <dbReference type="ChEBI" id="CHEBI:29105"/>
    </cofactor>
    <text evidence="1">Binds 1 zinc ion.</text>
</comment>
<comment type="similarity">
    <text evidence="1">Belongs to the NrdR family.</text>
</comment>
<keyword id="KW-0067">ATP-binding</keyword>
<keyword id="KW-0238">DNA-binding</keyword>
<keyword id="KW-0479">Metal-binding</keyword>
<keyword id="KW-0547">Nucleotide-binding</keyword>
<keyword id="KW-1185">Reference proteome</keyword>
<keyword id="KW-0678">Repressor</keyword>
<keyword id="KW-0804">Transcription</keyword>
<keyword id="KW-0805">Transcription regulation</keyword>
<keyword id="KW-0862">Zinc</keyword>
<keyword id="KW-0863">Zinc-finger</keyword>